<name>BIOB_NEIM0</name>
<sequence>MTVSPVALRRKTECKPHPTARYWKKCDVEALFGLPFLELVHQAAEVHRQNFNPREIQLSTLLSIKTGGCPEDCAYCPQSAHHNTNLGKEQMMDVDEIVEKAKIAKSRGASRFCMGAAWRGPKPKDVETVSAIIKAVKGLGMETCGTFGMLEEGMAEDLKEAGLDYYNHNLDTDPDRYNDIIHTRRHEDRMDTLGKVRNAGLKVCCGGIVGMNETRAERAGLIASLANLDPQPESVPINRLVKVEGTPLDDAEDLDWTEFVRTIAVARITMPQSYVRLSAGRSNMPEAMQAMCFMAGANSIFYGDKLLTTGNPDEDGDRILMEKLNLYPLQFELEGEVAEVEKASGIKVDY</sequence>
<protein>
    <recommendedName>
        <fullName evidence="1">Biotin synthase</fullName>
        <ecNumber evidence="1">2.8.1.6</ecNumber>
    </recommendedName>
</protein>
<gene>
    <name evidence="1" type="primary">bioB</name>
    <name type="ordered locus">NMCC_1066</name>
</gene>
<comment type="function">
    <text evidence="1">Catalyzes the conversion of dethiobiotin (DTB) to biotin by the insertion of a sulfur atom into dethiobiotin via a radical-based mechanism.</text>
</comment>
<comment type="catalytic activity">
    <reaction evidence="1">
        <text>(4R,5S)-dethiobiotin + (sulfur carrier)-SH + 2 reduced [2Fe-2S]-[ferredoxin] + 2 S-adenosyl-L-methionine = (sulfur carrier)-H + biotin + 2 5'-deoxyadenosine + 2 L-methionine + 2 oxidized [2Fe-2S]-[ferredoxin]</text>
        <dbReference type="Rhea" id="RHEA:22060"/>
        <dbReference type="Rhea" id="RHEA-COMP:10000"/>
        <dbReference type="Rhea" id="RHEA-COMP:10001"/>
        <dbReference type="Rhea" id="RHEA-COMP:14737"/>
        <dbReference type="Rhea" id="RHEA-COMP:14739"/>
        <dbReference type="ChEBI" id="CHEBI:17319"/>
        <dbReference type="ChEBI" id="CHEBI:29917"/>
        <dbReference type="ChEBI" id="CHEBI:33737"/>
        <dbReference type="ChEBI" id="CHEBI:33738"/>
        <dbReference type="ChEBI" id="CHEBI:57586"/>
        <dbReference type="ChEBI" id="CHEBI:57844"/>
        <dbReference type="ChEBI" id="CHEBI:59789"/>
        <dbReference type="ChEBI" id="CHEBI:64428"/>
        <dbReference type="ChEBI" id="CHEBI:149473"/>
        <dbReference type="EC" id="2.8.1.6"/>
    </reaction>
</comment>
<comment type="cofactor">
    <cofactor evidence="1">
        <name>[4Fe-4S] cluster</name>
        <dbReference type="ChEBI" id="CHEBI:49883"/>
    </cofactor>
    <text evidence="1">Binds 1 [4Fe-4S] cluster. The cluster is coordinated with 3 cysteines and an exchangeable S-adenosyl-L-methionine.</text>
</comment>
<comment type="cofactor">
    <cofactor evidence="1">
        <name>[2Fe-2S] cluster</name>
        <dbReference type="ChEBI" id="CHEBI:190135"/>
    </cofactor>
    <text evidence="1">Binds 1 [2Fe-2S] cluster. The cluster is coordinated with 3 cysteines and 1 arginine.</text>
</comment>
<comment type="pathway">
    <text evidence="1">Cofactor biosynthesis; biotin biosynthesis; biotin from 7,8-diaminononanoate: step 2/2.</text>
</comment>
<comment type="subunit">
    <text evidence="1">Homodimer.</text>
</comment>
<comment type="similarity">
    <text evidence="1">Belongs to the radical SAM superfamily. Biotin synthase family.</text>
</comment>
<comment type="sequence caution" evidence="3">
    <conflict type="erroneous initiation">
        <sequence resource="EMBL-CDS" id="ABX73246"/>
    </conflict>
</comment>
<accession>A9LZ69</accession>
<feature type="chain" id="PRO_0000381495" description="Biotin synthase">
    <location>
        <begin position="1"/>
        <end position="350"/>
    </location>
</feature>
<feature type="domain" description="Radical SAM core" evidence="2">
    <location>
        <begin position="54"/>
        <end position="278"/>
    </location>
</feature>
<feature type="binding site" evidence="1">
    <location>
        <position position="69"/>
    </location>
    <ligand>
        <name>[4Fe-4S] cluster</name>
        <dbReference type="ChEBI" id="CHEBI:49883"/>
        <note>4Fe-4S-S-AdoMet</note>
    </ligand>
</feature>
<feature type="binding site" evidence="1">
    <location>
        <position position="73"/>
    </location>
    <ligand>
        <name>[4Fe-4S] cluster</name>
        <dbReference type="ChEBI" id="CHEBI:49883"/>
        <note>4Fe-4S-S-AdoMet</note>
    </ligand>
</feature>
<feature type="binding site" evidence="1">
    <location>
        <position position="76"/>
    </location>
    <ligand>
        <name>[4Fe-4S] cluster</name>
        <dbReference type="ChEBI" id="CHEBI:49883"/>
        <note>4Fe-4S-S-AdoMet</note>
    </ligand>
</feature>
<feature type="binding site" evidence="1">
    <location>
        <position position="113"/>
    </location>
    <ligand>
        <name>[2Fe-2S] cluster</name>
        <dbReference type="ChEBI" id="CHEBI:190135"/>
    </ligand>
</feature>
<feature type="binding site" evidence="1">
    <location>
        <position position="144"/>
    </location>
    <ligand>
        <name>[2Fe-2S] cluster</name>
        <dbReference type="ChEBI" id="CHEBI:190135"/>
    </ligand>
</feature>
<feature type="binding site" evidence="1">
    <location>
        <position position="204"/>
    </location>
    <ligand>
        <name>[2Fe-2S] cluster</name>
        <dbReference type="ChEBI" id="CHEBI:190135"/>
    </ligand>
</feature>
<feature type="binding site" evidence="1">
    <location>
        <position position="276"/>
    </location>
    <ligand>
        <name>[2Fe-2S] cluster</name>
        <dbReference type="ChEBI" id="CHEBI:190135"/>
    </ligand>
</feature>
<evidence type="ECO:0000255" key="1">
    <source>
        <dbReference type="HAMAP-Rule" id="MF_01694"/>
    </source>
</evidence>
<evidence type="ECO:0000255" key="2">
    <source>
        <dbReference type="PROSITE-ProRule" id="PRU01266"/>
    </source>
</evidence>
<evidence type="ECO:0000305" key="3"/>
<proteinExistence type="inferred from homology"/>
<organism>
    <name type="scientific">Neisseria meningitidis serogroup C (strain 053442)</name>
    <dbReference type="NCBI Taxonomy" id="374833"/>
    <lineage>
        <taxon>Bacteria</taxon>
        <taxon>Pseudomonadati</taxon>
        <taxon>Pseudomonadota</taxon>
        <taxon>Betaproteobacteria</taxon>
        <taxon>Neisseriales</taxon>
        <taxon>Neisseriaceae</taxon>
        <taxon>Neisseria</taxon>
    </lineage>
</organism>
<reference key="1">
    <citation type="journal article" date="2008" name="Genomics">
        <title>Characterization of ST-4821 complex, a unique Neisseria meningitidis clone.</title>
        <authorList>
            <person name="Peng J."/>
            <person name="Yang L."/>
            <person name="Yang F."/>
            <person name="Yang J."/>
            <person name="Yan Y."/>
            <person name="Nie H."/>
            <person name="Zhang X."/>
            <person name="Xiong Z."/>
            <person name="Jiang Y."/>
            <person name="Cheng F."/>
            <person name="Xu X."/>
            <person name="Chen S."/>
            <person name="Sun L."/>
            <person name="Li W."/>
            <person name="Shen Y."/>
            <person name="Shao Z."/>
            <person name="Liang X."/>
            <person name="Xu J."/>
            <person name="Jin Q."/>
        </authorList>
    </citation>
    <scope>NUCLEOTIDE SEQUENCE [LARGE SCALE GENOMIC DNA]</scope>
    <source>
        <strain>053442</strain>
    </source>
</reference>
<dbReference type="EC" id="2.8.1.6" evidence="1"/>
<dbReference type="EMBL" id="CP000381">
    <property type="protein sequence ID" value="ABX73246.1"/>
    <property type="status" value="ALT_INIT"/>
    <property type="molecule type" value="Genomic_DNA"/>
</dbReference>
<dbReference type="RefSeq" id="WP_002239073.1">
    <property type="nucleotide sequence ID" value="NC_010120.1"/>
</dbReference>
<dbReference type="SMR" id="A9LZ69"/>
<dbReference type="KEGG" id="nmn:NMCC_1066"/>
<dbReference type="HOGENOM" id="CLU_033172_1_2_4"/>
<dbReference type="UniPathway" id="UPA00078">
    <property type="reaction ID" value="UER00162"/>
</dbReference>
<dbReference type="Proteomes" id="UP000001177">
    <property type="component" value="Chromosome"/>
</dbReference>
<dbReference type="GO" id="GO:0051537">
    <property type="term" value="F:2 iron, 2 sulfur cluster binding"/>
    <property type="evidence" value="ECO:0007669"/>
    <property type="project" value="UniProtKB-KW"/>
</dbReference>
<dbReference type="GO" id="GO:0051539">
    <property type="term" value="F:4 iron, 4 sulfur cluster binding"/>
    <property type="evidence" value="ECO:0007669"/>
    <property type="project" value="UniProtKB-KW"/>
</dbReference>
<dbReference type="GO" id="GO:0004076">
    <property type="term" value="F:biotin synthase activity"/>
    <property type="evidence" value="ECO:0007669"/>
    <property type="project" value="UniProtKB-UniRule"/>
</dbReference>
<dbReference type="GO" id="GO:0005506">
    <property type="term" value="F:iron ion binding"/>
    <property type="evidence" value="ECO:0007669"/>
    <property type="project" value="UniProtKB-UniRule"/>
</dbReference>
<dbReference type="GO" id="GO:0009102">
    <property type="term" value="P:biotin biosynthetic process"/>
    <property type="evidence" value="ECO:0007669"/>
    <property type="project" value="UniProtKB-UniRule"/>
</dbReference>
<dbReference type="CDD" id="cd01335">
    <property type="entry name" value="Radical_SAM"/>
    <property type="match status" value="1"/>
</dbReference>
<dbReference type="FunFam" id="3.20.20.70:FF:000011">
    <property type="entry name" value="Biotin synthase"/>
    <property type="match status" value="1"/>
</dbReference>
<dbReference type="Gene3D" id="3.20.20.70">
    <property type="entry name" value="Aldolase class I"/>
    <property type="match status" value="1"/>
</dbReference>
<dbReference type="HAMAP" id="MF_01694">
    <property type="entry name" value="BioB"/>
    <property type="match status" value="1"/>
</dbReference>
<dbReference type="InterPro" id="IPR013785">
    <property type="entry name" value="Aldolase_TIM"/>
</dbReference>
<dbReference type="InterPro" id="IPR010722">
    <property type="entry name" value="BATS_dom"/>
</dbReference>
<dbReference type="InterPro" id="IPR002684">
    <property type="entry name" value="Biotin_synth/BioAB"/>
</dbReference>
<dbReference type="InterPro" id="IPR024177">
    <property type="entry name" value="Biotin_synthase"/>
</dbReference>
<dbReference type="InterPro" id="IPR006638">
    <property type="entry name" value="Elp3/MiaA/NifB-like_rSAM"/>
</dbReference>
<dbReference type="InterPro" id="IPR007197">
    <property type="entry name" value="rSAM"/>
</dbReference>
<dbReference type="NCBIfam" id="TIGR00433">
    <property type="entry name" value="bioB"/>
    <property type="match status" value="1"/>
</dbReference>
<dbReference type="PANTHER" id="PTHR22976">
    <property type="entry name" value="BIOTIN SYNTHASE"/>
    <property type="match status" value="1"/>
</dbReference>
<dbReference type="PANTHER" id="PTHR22976:SF2">
    <property type="entry name" value="BIOTIN SYNTHASE, MITOCHONDRIAL"/>
    <property type="match status" value="1"/>
</dbReference>
<dbReference type="Pfam" id="PF06968">
    <property type="entry name" value="BATS"/>
    <property type="match status" value="1"/>
</dbReference>
<dbReference type="Pfam" id="PF04055">
    <property type="entry name" value="Radical_SAM"/>
    <property type="match status" value="1"/>
</dbReference>
<dbReference type="PIRSF" id="PIRSF001619">
    <property type="entry name" value="Biotin_synth"/>
    <property type="match status" value="1"/>
</dbReference>
<dbReference type="SFLD" id="SFLDG01060">
    <property type="entry name" value="BATS_domain_containing"/>
    <property type="match status" value="1"/>
</dbReference>
<dbReference type="SFLD" id="SFLDF00272">
    <property type="entry name" value="biotin_synthase"/>
    <property type="match status" value="1"/>
</dbReference>
<dbReference type="SMART" id="SM00876">
    <property type="entry name" value="BATS"/>
    <property type="match status" value="1"/>
</dbReference>
<dbReference type="SMART" id="SM00729">
    <property type="entry name" value="Elp3"/>
    <property type="match status" value="1"/>
</dbReference>
<dbReference type="SUPFAM" id="SSF102114">
    <property type="entry name" value="Radical SAM enzymes"/>
    <property type="match status" value="1"/>
</dbReference>
<dbReference type="PROSITE" id="PS51918">
    <property type="entry name" value="RADICAL_SAM"/>
    <property type="match status" value="1"/>
</dbReference>
<keyword id="KW-0001">2Fe-2S</keyword>
<keyword id="KW-0004">4Fe-4S</keyword>
<keyword id="KW-0093">Biotin biosynthesis</keyword>
<keyword id="KW-0408">Iron</keyword>
<keyword id="KW-0411">Iron-sulfur</keyword>
<keyword id="KW-0479">Metal-binding</keyword>
<keyword id="KW-0949">S-adenosyl-L-methionine</keyword>
<keyword id="KW-0808">Transferase</keyword>